<keyword id="KW-0025">Alternative splicing</keyword>
<keyword id="KW-0090">Biological rhythms</keyword>
<keyword id="KW-1003">Cell membrane</keyword>
<keyword id="KW-0966">Cell projection</keyword>
<keyword id="KW-0157">Chromophore</keyword>
<keyword id="KW-1015">Disulfide bond</keyword>
<keyword id="KW-0297">G-protein coupled receptor</keyword>
<keyword id="KW-0472">Membrane</keyword>
<keyword id="KW-0600">Photoreceptor protein</keyword>
<keyword id="KW-0675">Receptor</keyword>
<keyword id="KW-1185">Reference proteome</keyword>
<keyword id="KW-0681">Retinal protein</keyword>
<keyword id="KW-0716">Sensory transduction</keyword>
<keyword id="KW-0807">Transducer</keyword>
<keyword id="KW-0812">Transmembrane</keyword>
<keyword id="KW-1133">Transmembrane helix</keyword>
<evidence type="ECO:0000250" key="1">
    <source>
        <dbReference type="UniProtKB" id="Q9QXZ9"/>
    </source>
</evidence>
<evidence type="ECO:0000255" key="2"/>
<evidence type="ECO:0000255" key="3">
    <source>
        <dbReference type="PROSITE-ProRule" id="PRU00521"/>
    </source>
</evidence>
<evidence type="ECO:0000256" key="4">
    <source>
        <dbReference type="SAM" id="MobiDB-lite"/>
    </source>
</evidence>
<evidence type="ECO:0000269" key="5">
    <source>
    </source>
</evidence>
<evidence type="ECO:0000269" key="6">
    <source>
    </source>
</evidence>
<evidence type="ECO:0000269" key="7">
    <source>
    </source>
</evidence>
<evidence type="ECO:0000269" key="8">
    <source ref="2"/>
</evidence>
<evidence type="ECO:0000269" key="9">
    <source ref="4"/>
</evidence>
<evidence type="ECO:0000303" key="10">
    <source>
    </source>
</evidence>
<evidence type="ECO:0000305" key="11"/>
<feature type="chain" id="PRO_0000197815" description="Melanopsin">
    <location>
        <begin position="1"/>
        <end position="478"/>
    </location>
</feature>
<feature type="topological domain" description="Extracellular" evidence="2">
    <location>
        <begin position="1"/>
        <end position="72"/>
    </location>
</feature>
<feature type="transmembrane region" description="Helical; Name=1" evidence="2">
    <location>
        <begin position="73"/>
        <end position="93"/>
    </location>
</feature>
<feature type="topological domain" description="Cytoplasmic" evidence="2">
    <location>
        <begin position="94"/>
        <end position="107"/>
    </location>
</feature>
<feature type="transmembrane region" description="Helical; Name=2" evidence="2">
    <location>
        <begin position="108"/>
        <end position="128"/>
    </location>
</feature>
<feature type="topological domain" description="Extracellular" evidence="2">
    <location>
        <begin position="129"/>
        <end position="144"/>
    </location>
</feature>
<feature type="transmembrane region" description="Helical; Name=3" evidence="2">
    <location>
        <begin position="145"/>
        <end position="165"/>
    </location>
</feature>
<feature type="topological domain" description="Cytoplasmic" evidence="2">
    <location>
        <begin position="166"/>
        <end position="188"/>
    </location>
</feature>
<feature type="transmembrane region" description="Helical; Name=4" evidence="2">
    <location>
        <begin position="189"/>
        <end position="209"/>
    </location>
</feature>
<feature type="topological domain" description="Extracellular" evidence="2">
    <location>
        <begin position="210"/>
        <end position="238"/>
    </location>
</feature>
<feature type="transmembrane region" description="Helical; Name=5" evidence="2">
    <location>
        <begin position="239"/>
        <end position="259"/>
    </location>
</feature>
<feature type="topological domain" description="Cytoplasmic" evidence="2">
    <location>
        <begin position="260"/>
        <end position="296"/>
    </location>
</feature>
<feature type="transmembrane region" description="Helical; Name=6" evidence="2">
    <location>
        <begin position="297"/>
        <end position="317"/>
    </location>
</feature>
<feature type="topological domain" description="Extracellular" evidence="2">
    <location>
        <begin position="318"/>
        <end position="332"/>
    </location>
</feature>
<feature type="transmembrane region" description="Helical; Name=7" evidence="2">
    <location>
        <begin position="333"/>
        <end position="353"/>
    </location>
</feature>
<feature type="topological domain" description="Cytoplasmic" evidence="2">
    <location>
        <begin position="354"/>
        <end position="478"/>
    </location>
</feature>
<feature type="region of interest" description="Disordered" evidence="4">
    <location>
        <begin position="1"/>
        <end position="32"/>
    </location>
</feature>
<feature type="region of interest" description="Disordered" evidence="4">
    <location>
        <begin position="440"/>
        <end position="478"/>
    </location>
</feature>
<feature type="compositionally biased region" description="Pro residues" evidence="4">
    <location>
        <begin position="1"/>
        <end position="14"/>
    </location>
</feature>
<feature type="compositionally biased region" description="Basic and acidic residues" evidence="4">
    <location>
        <begin position="448"/>
        <end position="465"/>
    </location>
</feature>
<feature type="modified residue" description="N6-(retinylidene)lysine">
    <location>
        <position position="340"/>
    </location>
</feature>
<feature type="disulfide bond" evidence="3">
    <location>
        <begin position="143"/>
        <end position="221"/>
    </location>
</feature>
<feature type="splice variant" id="VSP_041123" description="In isoform 2." evidence="10">
    <original>R</original>
    <variation>RAVLRGVTVMMQ</variation>
    <location>
        <position position="97"/>
    </location>
</feature>
<feature type="sequence variant" id="VAR_029774" description="In dbSNP:rs2675703." evidence="6 9">
    <original>P</original>
    <variation>L</variation>
    <location>
        <position position="10"/>
    </location>
</feature>
<feature type="sequence variant" id="VAR_020430" description="In dbSNP:rs1079610." evidence="8">
    <original>T</original>
    <variation>I</variation>
    <location>
        <position position="394"/>
    </location>
</feature>
<feature type="sequence variant" id="VAR_029775" description="In dbSNP:rs12262894.">
    <original>G</original>
    <variation>D</variation>
    <location>
        <position position="444"/>
    </location>
</feature>
<protein>
    <recommendedName>
        <fullName>Melanopsin</fullName>
    </recommendedName>
    <alternativeName>
        <fullName>Opsin-4</fullName>
    </alternativeName>
</protein>
<gene>
    <name type="primary">OPN4</name>
    <name type="synonym">MOP</name>
</gene>
<name>OPN4_HUMAN</name>
<accession>Q9UHM6</accession>
<accession>B7ZLB3</accession>
<accession>Q14D01</accession>
<accession>Q2PP22</accession>
<accession>Q8NGQ9</accession>
<dbReference type="EMBL" id="AF147788">
    <property type="protein sequence ID" value="AAF24978.1"/>
    <property type="molecule type" value="Genomic_DNA"/>
</dbReference>
<dbReference type="EMBL" id="DQ314804">
    <property type="protein sequence ID" value="ABC40723.1"/>
    <property type="molecule type" value="Genomic_DNA"/>
</dbReference>
<dbReference type="EMBL" id="BC113558">
    <property type="protein sequence ID" value="AAI13559.1"/>
    <property type="molecule type" value="mRNA"/>
</dbReference>
<dbReference type="EMBL" id="BC143688">
    <property type="protein sequence ID" value="AAI43689.1"/>
    <property type="molecule type" value="mRNA"/>
</dbReference>
<dbReference type="EMBL" id="AB065730">
    <property type="protein sequence ID" value="BAC05951.1"/>
    <property type="status" value="ALT_SEQ"/>
    <property type="molecule type" value="Genomic_DNA"/>
</dbReference>
<dbReference type="CCDS" id="CCDS31237.1">
    <molecule id="Q9UHM6-2"/>
</dbReference>
<dbReference type="CCDS" id="CCDS7376.1">
    <molecule id="Q9UHM6-1"/>
</dbReference>
<dbReference type="RefSeq" id="NP_001025186.1">
    <molecule id="Q9UHM6-2"/>
    <property type="nucleotide sequence ID" value="NM_001030015.3"/>
</dbReference>
<dbReference type="RefSeq" id="NP_150598.1">
    <molecule id="Q9UHM6-1"/>
    <property type="nucleotide sequence ID" value="NM_033282.4"/>
</dbReference>
<dbReference type="SMR" id="Q9UHM6"/>
<dbReference type="BioGRID" id="125146">
    <property type="interactions" value="69"/>
</dbReference>
<dbReference type="FunCoup" id="Q9UHM6">
    <property type="interactions" value="437"/>
</dbReference>
<dbReference type="IntAct" id="Q9UHM6">
    <property type="interactions" value="4"/>
</dbReference>
<dbReference type="STRING" id="9606.ENSP00000361141"/>
<dbReference type="TCDB" id="9.A.14.1.8">
    <property type="family name" value="the g-protein-coupled receptor (gpcr) family"/>
</dbReference>
<dbReference type="GlyGen" id="Q9UHM6">
    <property type="glycosylation" value="3 sites"/>
</dbReference>
<dbReference type="iPTMnet" id="Q9UHM6"/>
<dbReference type="PhosphoSitePlus" id="Q9UHM6"/>
<dbReference type="BioMuta" id="OPN4"/>
<dbReference type="DMDM" id="13632136"/>
<dbReference type="MassIVE" id="Q9UHM6"/>
<dbReference type="PaxDb" id="9606-ENSP00000361141"/>
<dbReference type="PeptideAtlas" id="Q9UHM6"/>
<dbReference type="Antibodypedia" id="30087">
    <property type="antibodies" value="99 antibodies from 23 providers"/>
</dbReference>
<dbReference type="DNASU" id="94233"/>
<dbReference type="Ensembl" id="ENST00000241891.10">
    <molecule id="Q9UHM6-1"/>
    <property type="protein sequence ID" value="ENSP00000241891.5"/>
    <property type="gene ID" value="ENSG00000122375.13"/>
</dbReference>
<dbReference type="Ensembl" id="ENST00000372071.7">
    <molecule id="Q9UHM6-2"/>
    <property type="protein sequence ID" value="ENSP00000361141.2"/>
    <property type="gene ID" value="ENSG00000122375.13"/>
</dbReference>
<dbReference type="GeneID" id="94233"/>
<dbReference type="KEGG" id="hsa:94233"/>
<dbReference type="MANE-Select" id="ENST00000241891.10">
    <property type="protein sequence ID" value="ENSP00000241891.5"/>
    <property type="RefSeq nucleotide sequence ID" value="NM_033282.4"/>
    <property type="RefSeq protein sequence ID" value="NP_150598.1"/>
</dbReference>
<dbReference type="UCSC" id="uc001kdp.4">
    <molecule id="Q9UHM6-1"/>
    <property type="organism name" value="human"/>
</dbReference>
<dbReference type="AGR" id="HGNC:14449"/>
<dbReference type="CTD" id="94233"/>
<dbReference type="DisGeNET" id="94233"/>
<dbReference type="GeneCards" id="OPN4"/>
<dbReference type="HGNC" id="HGNC:14449">
    <property type="gene designation" value="OPN4"/>
</dbReference>
<dbReference type="HPA" id="ENSG00000122375">
    <property type="expression patterns" value="Tissue enhanced (adipose tissue, brain, skeletal muscle)"/>
</dbReference>
<dbReference type="MIM" id="606665">
    <property type="type" value="gene"/>
</dbReference>
<dbReference type="neXtProt" id="NX_Q9UHM6"/>
<dbReference type="OpenTargets" id="ENSG00000122375"/>
<dbReference type="PharmGKB" id="PA31940"/>
<dbReference type="VEuPathDB" id="HostDB:ENSG00000122375"/>
<dbReference type="eggNOG" id="KOG3656">
    <property type="taxonomic scope" value="Eukaryota"/>
</dbReference>
<dbReference type="GeneTree" id="ENSGT01120000271853"/>
<dbReference type="HOGENOM" id="CLU_009579_3_12_1"/>
<dbReference type="InParanoid" id="Q9UHM6"/>
<dbReference type="OMA" id="WKMAKIV"/>
<dbReference type="OrthoDB" id="9996086at2759"/>
<dbReference type="PAN-GO" id="Q9UHM6">
    <property type="GO annotations" value="5 GO annotations based on evolutionary models"/>
</dbReference>
<dbReference type="PhylomeDB" id="Q9UHM6"/>
<dbReference type="TreeFam" id="TF324998"/>
<dbReference type="PathwayCommons" id="Q9UHM6"/>
<dbReference type="Reactome" id="R-HSA-416476">
    <property type="pathway name" value="G alpha (q) signalling events"/>
</dbReference>
<dbReference type="Reactome" id="R-HSA-419771">
    <property type="pathway name" value="Opsins"/>
</dbReference>
<dbReference type="SignaLink" id="Q9UHM6"/>
<dbReference type="BioGRID-ORCS" id="94233">
    <property type="hits" value="17 hits in 1134 CRISPR screens"/>
</dbReference>
<dbReference type="GeneWiki" id="Melanopsin"/>
<dbReference type="GenomeRNAi" id="94233"/>
<dbReference type="Pharos" id="Q9UHM6">
    <property type="development level" value="Tbio"/>
</dbReference>
<dbReference type="PRO" id="PR:Q9UHM6"/>
<dbReference type="Proteomes" id="UP000005640">
    <property type="component" value="Chromosome 10"/>
</dbReference>
<dbReference type="RNAct" id="Q9UHM6">
    <property type="molecule type" value="protein"/>
</dbReference>
<dbReference type="Bgee" id="ENSG00000122375">
    <property type="expression patterns" value="Expressed in gastrocnemius and 63 other cell types or tissues"/>
</dbReference>
<dbReference type="ExpressionAtlas" id="Q9UHM6">
    <property type="expression patterns" value="baseline and differential"/>
</dbReference>
<dbReference type="GO" id="GO:0030424">
    <property type="term" value="C:axon"/>
    <property type="evidence" value="ECO:0007669"/>
    <property type="project" value="UniProtKB-SubCell"/>
</dbReference>
<dbReference type="GO" id="GO:0030425">
    <property type="term" value="C:dendrite"/>
    <property type="evidence" value="ECO:0007669"/>
    <property type="project" value="UniProtKB-SubCell"/>
</dbReference>
<dbReference type="GO" id="GO:0016020">
    <property type="term" value="C:membrane"/>
    <property type="evidence" value="ECO:0000304"/>
    <property type="project" value="UniProtKB"/>
</dbReference>
<dbReference type="GO" id="GO:0043204">
    <property type="term" value="C:perikaryon"/>
    <property type="evidence" value="ECO:0007669"/>
    <property type="project" value="UniProtKB-SubCell"/>
</dbReference>
<dbReference type="GO" id="GO:0097381">
    <property type="term" value="C:photoreceptor disc membrane"/>
    <property type="evidence" value="ECO:0000304"/>
    <property type="project" value="Reactome"/>
</dbReference>
<dbReference type="GO" id="GO:0005886">
    <property type="term" value="C:plasma membrane"/>
    <property type="evidence" value="ECO:0000314"/>
    <property type="project" value="UniProtKB"/>
</dbReference>
<dbReference type="GO" id="GO:1990913">
    <property type="term" value="C:sperm head plasma membrane"/>
    <property type="evidence" value="ECO:0007669"/>
    <property type="project" value="Ensembl"/>
</dbReference>
<dbReference type="GO" id="GO:0005502">
    <property type="term" value="F:11-cis retinal binding"/>
    <property type="evidence" value="ECO:0000314"/>
    <property type="project" value="UniProtKB"/>
</dbReference>
<dbReference type="GO" id="GO:0008020">
    <property type="term" value="F:G protein-coupled photoreceptor activity"/>
    <property type="evidence" value="ECO:0000314"/>
    <property type="project" value="UniProtKB"/>
</dbReference>
<dbReference type="GO" id="GO:0071482">
    <property type="term" value="P:cellular response to light stimulus"/>
    <property type="evidence" value="ECO:0000318"/>
    <property type="project" value="GO_Central"/>
</dbReference>
<dbReference type="GO" id="GO:0050960">
    <property type="term" value="P:detection of temperature stimulus involved in thermoception"/>
    <property type="evidence" value="ECO:0007669"/>
    <property type="project" value="Ensembl"/>
</dbReference>
<dbReference type="GO" id="GO:0007186">
    <property type="term" value="P:G protein-coupled receptor signaling pathway"/>
    <property type="evidence" value="ECO:0000318"/>
    <property type="project" value="GO_Central"/>
</dbReference>
<dbReference type="GO" id="GO:1990384">
    <property type="term" value="P:hyaloid vascular plexus regression"/>
    <property type="evidence" value="ECO:0000250"/>
    <property type="project" value="UniProtKB"/>
</dbReference>
<dbReference type="GO" id="GO:0007634">
    <property type="term" value="P:optokinetic behavior"/>
    <property type="evidence" value="ECO:0000250"/>
    <property type="project" value="UniProtKB"/>
</dbReference>
<dbReference type="GO" id="GO:0007602">
    <property type="term" value="P:phototransduction"/>
    <property type="evidence" value="ECO:0000314"/>
    <property type="project" value="UniProtKB"/>
</dbReference>
<dbReference type="GO" id="GO:0042752">
    <property type="term" value="P:regulation of circadian rhythm"/>
    <property type="evidence" value="ECO:0000250"/>
    <property type="project" value="UniProtKB"/>
</dbReference>
<dbReference type="GO" id="GO:0060041">
    <property type="term" value="P:retina development in camera-type eye"/>
    <property type="evidence" value="ECO:0007669"/>
    <property type="project" value="Ensembl"/>
</dbReference>
<dbReference type="GO" id="GO:0048511">
    <property type="term" value="P:rhythmic process"/>
    <property type="evidence" value="ECO:0007669"/>
    <property type="project" value="UniProtKB-KW"/>
</dbReference>
<dbReference type="GO" id="GO:0043052">
    <property type="term" value="P:thermotaxis"/>
    <property type="evidence" value="ECO:0007669"/>
    <property type="project" value="Ensembl"/>
</dbReference>
<dbReference type="GO" id="GO:0007601">
    <property type="term" value="P:visual perception"/>
    <property type="evidence" value="ECO:0007669"/>
    <property type="project" value="InterPro"/>
</dbReference>
<dbReference type="CDD" id="cd15336">
    <property type="entry name" value="7tmA_Melanopsin"/>
    <property type="match status" value="1"/>
</dbReference>
<dbReference type="FunFam" id="1.20.1070.10:FF:000083">
    <property type="entry name" value="Melanopsin 1"/>
    <property type="match status" value="1"/>
</dbReference>
<dbReference type="Gene3D" id="1.20.1070.10">
    <property type="entry name" value="Rhodopsin 7-helix transmembrane proteins"/>
    <property type="match status" value="1"/>
</dbReference>
<dbReference type="InterPro" id="IPR050125">
    <property type="entry name" value="GPCR_opsins"/>
</dbReference>
<dbReference type="InterPro" id="IPR000276">
    <property type="entry name" value="GPCR_Rhodpsn"/>
</dbReference>
<dbReference type="InterPro" id="IPR017452">
    <property type="entry name" value="GPCR_Rhodpsn_7TM"/>
</dbReference>
<dbReference type="InterPro" id="IPR001760">
    <property type="entry name" value="Opsin"/>
</dbReference>
<dbReference type="InterPro" id="IPR027430">
    <property type="entry name" value="Retinal_BS"/>
</dbReference>
<dbReference type="PANTHER" id="PTHR24240">
    <property type="entry name" value="OPSIN"/>
    <property type="match status" value="1"/>
</dbReference>
<dbReference type="Pfam" id="PF00001">
    <property type="entry name" value="7tm_1"/>
    <property type="match status" value="1"/>
</dbReference>
<dbReference type="PRINTS" id="PR00237">
    <property type="entry name" value="GPCRRHODOPSN"/>
</dbReference>
<dbReference type="PRINTS" id="PR00238">
    <property type="entry name" value="OPSIN"/>
</dbReference>
<dbReference type="SMART" id="SM01381">
    <property type="entry name" value="7TM_GPCR_Srsx"/>
    <property type="match status" value="1"/>
</dbReference>
<dbReference type="SUPFAM" id="SSF81321">
    <property type="entry name" value="Family A G protein-coupled receptor-like"/>
    <property type="match status" value="1"/>
</dbReference>
<dbReference type="PROSITE" id="PS00237">
    <property type="entry name" value="G_PROTEIN_RECEP_F1_1"/>
    <property type="match status" value="1"/>
</dbReference>
<dbReference type="PROSITE" id="PS50262">
    <property type="entry name" value="G_PROTEIN_RECEP_F1_2"/>
    <property type="match status" value="1"/>
</dbReference>
<dbReference type="PROSITE" id="PS00238">
    <property type="entry name" value="OPSIN"/>
    <property type="match status" value="1"/>
</dbReference>
<comment type="function">
    <text evidence="1 7">Photoreceptor that binds cis-retinaldehydes (PubMed:15674244). Contributes to pupillar reflex, photoentrainment and other non-image forming responses to light (By similarity). May be involved in the optokinetic visual tracking response (By similarity). May be involved in the regulation of retinal hyaloid vessel growth and regression (By similarity).</text>
</comment>
<comment type="interaction">
    <interactant intactId="EBI-18058356">
        <id>Q9UHM6</id>
    </interactant>
    <interactant intactId="EBI-947187">
        <id>Q9UHD9</id>
        <label>UBQLN2</label>
    </interactant>
    <organismsDiffer>false</organismsDiffer>
    <experiments>3</experiments>
</comment>
<comment type="subcellular location">
    <subcellularLocation>
        <location evidence="1">Cell membrane</location>
        <topology evidence="2">Multi-pass membrane protein</topology>
    </subcellularLocation>
    <subcellularLocation>
        <location evidence="1">Cell projection</location>
        <location evidence="1">Axon</location>
    </subcellularLocation>
    <subcellularLocation>
        <location evidence="1">Cell projection</location>
        <location evidence="1">Dendrite</location>
    </subcellularLocation>
    <subcellularLocation>
        <location evidence="1">Perikaryon</location>
    </subcellularLocation>
</comment>
<comment type="alternative products">
    <event type="alternative splicing"/>
    <isoform>
        <id>Q9UHM6-1</id>
        <name>1</name>
        <sequence type="displayed"/>
    </isoform>
    <isoform>
        <id>Q9UHM6-2</id>
        <name>2</name>
        <sequence type="described" ref="VSP_041123"/>
    </isoform>
</comment>
<comment type="tissue specificity">
    <text evidence="5">Expressed in the retina.</text>
</comment>
<comment type="similarity">
    <text evidence="3">Belongs to the G-protein coupled receptor 1 family. Opsin subfamily.</text>
</comment>
<comment type="sequence caution" evidence="11">
    <conflict type="erroneous gene model prediction">
        <sequence resource="EMBL-CDS" id="BAC05951"/>
    </conflict>
</comment>
<organism>
    <name type="scientific">Homo sapiens</name>
    <name type="common">Human</name>
    <dbReference type="NCBI Taxonomy" id="9606"/>
    <lineage>
        <taxon>Eukaryota</taxon>
        <taxon>Metazoa</taxon>
        <taxon>Chordata</taxon>
        <taxon>Craniata</taxon>
        <taxon>Vertebrata</taxon>
        <taxon>Euteleostomi</taxon>
        <taxon>Mammalia</taxon>
        <taxon>Eutheria</taxon>
        <taxon>Euarchontoglires</taxon>
        <taxon>Primates</taxon>
        <taxon>Haplorrhini</taxon>
        <taxon>Catarrhini</taxon>
        <taxon>Hominidae</taxon>
        <taxon>Homo</taxon>
    </lineage>
</organism>
<sequence>MNPPSGPRVPPSPTQEPSCMATPAPPSWWDSSQSSISSLGRLPSISPTAPGTWAAAWVPLPTVDVPDHAHYTLGTVILLVGLTGMLGNLTVIYTFCRSRSLRTPANMFIINLAVSDFLMSFTQAPVFFTSSLYKQWLFGETGCEFYAFCGALFGISSMITLTAIALDRYLVITRPLATFGVASKRRAAFVLLGVWLYALAWSLPPFFGWSAYVPEGLLTSCSWDYMSFTPAVRAYTMLLCCFVFFLPLLIIIYCYIFIFRAIRETGRALQTFGACKGNGESLWQRQRLQSECKMAKIMLLVILLFVLSWAPYSAVALVAFAGYAHVLTPYMSSVPAVIAKASAIHNPIIYAITHPKYRVAIAQHLPCLGVLLGVSRRHSRPYPSYRSTHRSTLTSHTSNLSWISIRRRQESLGSESEVGWTHMEAAAVWGAAQQANGRSLYGQGLEDLEAKAPPRPQGHEAETPGKTKGLIPSQDPRM</sequence>
<proteinExistence type="evidence at protein level"/>
<reference key="1">
    <citation type="journal article" date="2000" name="J. Neurosci.">
        <title>A novel human opsin in the inner retina.</title>
        <authorList>
            <person name="Provencio I."/>
            <person name="Rodriguez I.R."/>
            <person name="Jiang G."/>
            <person name="Hayes W.P."/>
            <person name="Moreira E.F."/>
            <person name="Rollag M.D."/>
        </authorList>
    </citation>
    <scope>NUCLEOTIDE SEQUENCE [GENOMIC DNA]</scope>
    <scope>TISSUE SPECIFICITY</scope>
</reference>
<reference key="2">
    <citation type="submission" date="2005-12" db="EMBL/GenBank/DDBJ databases">
        <authorList>
            <consortium name="SeattleSNPs variation discovery resource"/>
        </authorList>
    </citation>
    <scope>NUCLEOTIDE SEQUENCE [GENOMIC DNA]</scope>
    <scope>VARIANT ILE-394</scope>
</reference>
<reference key="3">
    <citation type="journal article" date="2004" name="Genome Res.">
        <title>The status, quality, and expansion of the NIH full-length cDNA project: the Mammalian Gene Collection (MGC).</title>
        <authorList>
            <consortium name="The MGC Project Team"/>
        </authorList>
    </citation>
    <scope>NUCLEOTIDE SEQUENCE [LARGE SCALE MRNA] (ISOFORMS 1 AND 2)</scope>
    <scope>VARIANT LEU-10</scope>
    <source>
        <tissue>Brain</tissue>
        <tissue>Brain cortex</tissue>
    </source>
</reference>
<reference key="4">
    <citation type="submission" date="2001-07" db="EMBL/GenBank/DDBJ databases">
        <title>Genome-wide discovery and analysis of human seven transmembrane helix receptor genes.</title>
        <authorList>
            <person name="Suwa M."/>
            <person name="Sato T."/>
            <person name="Okouchi I."/>
            <person name="Arita M."/>
            <person name="Futami K."/>
            <person name="Matsumoto S."/>
            <person name="Tsutsumi S."/>
            <person name="Aburatani H."/>
            <person name="Asai K."/>
            <person name="Akiyama Y."/>
        </authorList>
    </citation>
    <scope>NUCLEOTIDE SEQUENCE [GENOMIC DNA] OF 1-418</scope>
    <scope>VARIANT LEU-10</scope>
</reference>
<reference key="5">
    <citation type="journal article" date="2005" name="Nature">
        <title>Addition of human melanopsin renders mammalian cells photoresponsive.</title>
        <authorList>
            <person name="Melyan Z."/>
            <person name="Tarttelin E.E."/>
            <person name="Bellingham J."/>
            <person name="Lucas R.J."/>
            <person name="Hankins M.W."/>
        </authorList>
    </citation>
    <scope>FUNCTION</scope>
</reference>